<protein>
    <recommendedName>
        <fullName evidence="10">Nitrate reductase [NADH] 1</fullName>
        <shortName evidence="10">NR</shortName>
        <ecNumber evidence="5 8">1.7.1.1</ecNumber>
    </recommendedName>
</protein>
<comment type="function">
    <text evidence="5">Nitrate reductase is a key enzyme involved in the first step of nitrate assimilation in plants, fungi and bacteria.</text>
</comment>
<comment type="catalytic activity">
    <reaction evidence="5 8">
        <text>nitrite + NAD(+) + H2O = nitrate + NADH + H(+)</text>
        <dbReference type="Rhea" id="RHEA:17913"/>
        <dbReference type="ChEBI" id="CHEBI:15377"/>
        <dbReference type="ChEBI" id="CHEBI:15378"/>
        <dbReference type="ChEBI" id="CHEBI:16301"/>
        <dbReference type="ChEBI" id="CHEBI:17632"/>
        <dbReference type="ChEBI" id="CHEBI:57540"/>
        <dbReference type="ChEBI" id="CHEBI:57945"/>
        <dbReference type="EC" id="1.7.1.1"/>
    </reaction>
</comment>
<comment type="cofactor">
    <cofactor evidence="7">
        <name>FAD</name>
        <dbReference type="ChEBI" id="CHEBI:57692"/>
    </cofactor>
    <text evidence="7">Binds 1 FAD.</text>
</comment>
<comment type="cofactor">
    <cofactor>
        <name>heme</name>
        <dbReference type="ChEBI" id="CHEBI:30413"/>
    </cofactor>
    <text>Binds 1 heme group. The heme group is called cytochrome b-557.</text>
</comment>
<comment type="cofactor">
    <cofactor evidence="1">
        <name>Mo-molybdopterin</name>
        <dbReference type="ChEBI" id="CHEBI:71302"/>
    </cofactor>
    <text evidence="1">Binds 1 Mo-molybdopterin (Mo-MPT) cofactor per subunit.</text>
</comment>
<comment type="subunit">
    <text>Homodimer.</text>
</comment>
<comment type="similarity">
    <text evidence="11">Belongs to the nitrate reductase family.</text>
</comment>
<name>NIA1_MAIZE</name>
<accession>P17571</accession>
<organism>
    <name type="scientific">Zea mays</name>
    <name type="common">Maize</name>
    <dbReference type="NCBI Taxonomy" id="4577"/>
    <lineage>
        <taxon>Eukaryota</taxon>
        <taxon>Viridiplantae</taxon>
        <taxon>Streptophyta</taxon>
        <taxon>Embryophyta</taxon>
        <taxon>Tracheophyta</taxon>
        <taxon>Spermatophyta</taxon>
        <taxon>Magnoliopsida</taxon>
        <taxon>Liliopsida</taxon>
        <taxon>Poales</taxon>
        <taxon>Poaceae</taxon>
        <taxon>PACMAD clade</taxon>
        <taxon>Panicoideae</taxon>
        <taxon>Andropogonodae</taxon>
        <taxon>Andropogoneae</taxon>
        <taxon>Tripsacinae</taxon>
        <taxon>Zea</taxon>
    </lineage>
</organism>
<proteinExistence type="evidence at protein level"/>
<sequence length="621" mass="69773">GFPVRVIIPGCIGGRMVKWLKRIIVTPAESDNYYHFKDNRVLPSHVDAELANAEAWWYKPEYIINELNINSVITTPCHDEILPINAFTTQRPYTLKGYAYSGGGKKVTRVEVTLDGGETWLVCTDHPEKPTKYGKYWCWCFWSLEVEVLDLLSAKEIAVRAWDESLNTQPEKLIWNVMGMMNNCWFRVKTNVCKPHKGEIGIVFDHPTLPGNESGGWMAKEKHLETAEAAAPGLKRSTSTPFMNTTDVGKEFTMSEVRKHASQESAWIVVHGHVYDCTKFLKDHPGGADSILINAGTDCTEEFDAIHSDKAKALLDTYRIGELITTGTGYSSDNSVHGGSVLSHLAPIRRAVRAPALSNPREKIHCRLVGKKELSRDVRLFRFSLPSPDQVLGLPIGKHIFVCASIEGKLCMRAYTPTSMVDEIGHFDLLVKVYFKNEHPKFPNGGLMTQYLDSLPVGSYIDVKGPLGHVEYTGRGSFVINGKQRHASRLAMICGGSGITPMYQIIQAVLRDQPEDHTEMHLVYANRTEDDILLRDELDRWAAEYPDRLKVWYVIDQVKRPEEGWKYSVGFVTEAVLREHVPEGGDDTLALACGPPPMIQFAISPNLEKMKYDMANSFVVF</sequence>
<evidence type="ECO:0000250" key="1"/>
<evidence type="ECO:0000255" key="2"/>
<evidence type="ECO:0000255" key="3">
    <source>
        <dbReference type="PROSITE-ProRule" id="PRU00279"/>
    </source>
</evidence>
<evidence type="ECO:0000255" key="4">
    <source>
        <dbReference type="PROSITE-ProRule" id="PRU00716"/>
    </source>
</evidence>
<evidence type="ECO:0000269" key="5">
    <source>
    </source>
</evidence>
<evidence type="ECO:0000269" key="6">
    <source>
    </source>
</evidence>
<evidence type="ECO:0000269" key="7">
    <source>
    </source>
</evidence>
<evidence type="ECO:0000269" key="8">
    <source>
    </source>
</evidence>
<evidence type="ECO:0000303" key="9">
    <source>
    </source>
</evidence>
<evidence type="ECO:0000303" key="10">
    <source>
    </source>
</evidence>
<evidence type="ECO:0000305" key="11"/>
<evidence type="ECO:0007744" key="12">
    <source>
        <dbReference type="PDB" id="2CND"/>
    </source>
</evidence>
<evidence type="ECO:0007829" key="13">
    <source>
        <dbReference type="PDB" id="1CNF"/>
    </source>
</evidence>
<evidence type="ECO:0007829" key="14">
    <source>
        <dbReference type="PDB" id="2CND"/>
    </source>
</evidence>
<gene>
    <name evidence="9" type="primary">NNR1</name>
</gene>
<dbReference type="EC" id="1.7.1.1" evidence="5 8"/>
<dbReference type="EMBL" id="M27821">
    <property type="protein sequence ID" value="AAA03202.1"/>
    <property type="molecule type" value="mRNA"/>
</dbReference>
<dbReference type="PIR" id="S19254">
    <property type="entry name" value="S19254"/>
</dbReference>
<dbReference type="PDB" id="1CNE">
    <property type="method" value="X-ray"/>
    <property type="resolution" value="3.00 A"/>
    <property type="chains" value="A=352-621"/>
</dbReference>
<dbReference type="PDB" id="1CNF">
    <property type="method" value="X-ray"/>
    <property type="resolution" value="2.70 A"/>
    <property type="chains" value="A=352-621"/>
</dbReference>
<dbReference type="PDB" id="2CND">
    <property type="method" value="X-ray"/>
    <property type="resolution" value="2.50 A"/>
    <property type="chains" value="A=352-621"/>
</dbReference>
<dbReference type="PDBsum" id="1CNE"/>
<dbReference type="PDBsum" id="1CNF"/>
<dbReference type="PDBsum" id="2CND"/>
<dbReference type="SMR" id="P17571"/>
<dbReference type="STRING" id="4577.P17571"/>
<dbReference type="iPTMnet" id="P17571"/>
<dbReference type="PaxDb" id="4577-GRMZM2G568636_P01"/>
<dbReference type="MaizeGDB" id="25899"/>
<dbReference type="eggNOG" id="KOG0534">
    <property type="taxonomic scope" value="Eukaryota"/>
</dbReference>
<dbReference type="eggNOG" id="KOG0535">
    <property type="taxonomic scope" value="Eukaryota"/>
</dbReference>
<dbReference type="eggNOG" id="KOG0537">
    <property type="taxonomic scope" value="Eukaryota"/>
</dbReference>
<dbReference type="InParanoid" id="P17571"/>
<dbReference type="BRENDA" id="1.7.1.1">
    <property type="organism ID" value="6752"/>
</dbReference>
<dbReference type="EvolutionaryTrace" id="P17571"/>
<dbReference type="Proteomes" id="UP000007305">
    <property type="component" value="Unplaced"/>
</dbReference>
<dbReference type="ExpressionAtlas" id="P17571">
    <property type="expression patterns" value="baseline and differential"/>
</dbReference>
<dbReference type="GO" id="GO:0071949">
    <property type="term" value="F:FAD binding"/>
    <property type="evidence" value="ECO:0000314"/>
    <property type="project" value="UniProtKB"/>
</dbReference>
<dbReference type="GO" id="GO:0020037">
    <property type="term" value="F:heme binding"/>
    <property type="evidence" value="ECO:0007669"/>
    <property type="project" value="InterPro"/>
</dbReference>
<dbReference type="GO" id="GO:0030151">
    <property type="term" value="F:molybdenum ion binding"/>
    <property type="evidence" value="ECO:0007669"/>
    <property type="project" value="InterPro"/>
</dbReference>
<dbReference type="GO" id="GO:0009703">
    <property type="term" value="F:nitrate reductase (NADH) activity"/>
    <property type="evidence" value="ECO:0000314"/>
    <property type="project" value="UniProtKB"/>
</dbReference>
<dbReference type="GO" id="GO:0042128">
    <property type="term" value="P:nitrate assimilation"/>
    <property type="evidence" value="ECO:0000314"/>
    <property type="project" value="UniProtKB"/>
</dbReference>
<dbReference type="GO" id="GO:0006809">
    <property type="term" value="P:nitric oxide biosynthetic process"/>
    <property type="evidence" value="ECO:0000318"/>
    <property type="project" value="GO_Central"/>
</dbReference>
<dbReference type="CDD" id="cd06183">
    <property type="entry name" value="cyt_b5_reduct_like"/>
    <property type="match status" value="1"/>
</dbReference>
<dbReference type="FunFam" id="2.40.30.10:FF:000021">
    <property type="entry name" value="NADH-cytochrome b5 reductase"/>
    <property type="match status" value="1"/>
</dbReference>
<dbReference type="FunFam" id="2.60.40.650:FF:000001">
    <property type="entry name" value="Nitrate reductase"/>
    <property type="match status" value="1"/>
</dbReference>
<dbReference type="FunFam" id="3.10.120.10:FF:000008">
    <property type="entry name" value="Nitrate reductase"/>
    <property type="match status" value="1"/>
</dbReference>
<dbReference type="FunFam" id="3.40.50.80:FF:000025">
    <property type="entry name" value="Nitrate reductase [NADH]"/>
    <property type="match status" value="1"/>
</dbReference>
<dbReference type="Gene3D" id="2.60.40.650">
    <property type="match status" value="1"/>
</dbReference>
<dbReference type="Gene3D" id="3.10.120.10">
    <property type="entry name" value="Cytochrome b5-like heme/steroid binding domain"/>
    <property type="match status" value="1"/>
</dbReference>
<dbReference type="Gene3D" id="3.40.50.80">
    <property type="entry name" value="Nucleotide-binding domain of ferredoxin-NADP reductase (FNR) module"/>
    <property type="match status" value="1"/>
</dbReference>
<dbReference type="Gene3D" id="3.90.420.10">
    <property type="entry name" value="Oxidoreductase, molybdopterin-binding domain"/>
    <property type="match status" value="1"/>
</dbReference>
<dbReference type="Gene3D" id="2.40.30.10">
    <property type="entry name" value="Translation factors"/>
    <property type="match status" value="1"/>
</dbReference>
<dbReference type="InterPro" id="IPR001834">
    <property type="entry name" value="CBR-like"/>
</dbReference>
<dbReference type="InterPro" id="IPR008333">
    <property type="entry name" value="Cbr1-like_FAD-bd_dom"/>
</dbReference>
<dbReference type="InterPro" id="IPR001199">
    <property type="entry name" value="Cyt_B5-like_heme/steroid-bd"/>
</dbReference>
<dbReference type="InterPro" id="IPR036400">
    <property type="entry name" value="Cyt_B5-like_heme/steroid_sf"/>
</dbReference>
<dbReference type="InterPro" id="IPR018506">
    <property type="entry name" value="Cyt_B5_heme-BS"/>
</dbReference>
<dbReference type="InterPro" id="IPR017927">
    <property type="entry name" value="FAD-bd_FR_type"/>
</dbReference>
<dbReference type="InterPro" id="IPR001709">
    <property type="entry name" value="Flavoprot_Pyr_Nucl_cyt_Rdtase"/>
</dbReference>
<dbReference type="InterPro" id="IPR039261">
    <property type="entry name" value="FNR_nucleotide-bd"/>
</dbReference>
<dbReference type="InterPro" id="IPR014756">
    <property type="entry name" value="Ig_E-set"/>
</dbReference>
<dbReference type="InterPro" id="IPR005066">
    <property type="entry name" value="MoCF_OxRdtse_dimer"/>
</dbReference>
<dbReference type="InterPro" id="IPR008335">
    <property type="entry name" value="Mopterin_OxRdtase_euk"/>
</dbReference>
<dbReference type="InterPro" id="IPR001433">
    <property type="entry name" value="OxRdtase_FAD/NAD-bd"/>
</dbReference>
<dbReference type="InterPro" id="IPR000572">
    <property type="entry name" value="OxRdtase_Mopterin-bd_dom"/>
</dbReference>
<dbReference type="InterPro" id="IPR036374">
    <property type="entry name" value="OxRdtase_Mopterin-bd_sf"/>
</dbReference>
<dbReference type="InterPro" id="IPR017938">
    <property type="entry name" value="Riboflavin_synthase-like_b-brl"/>
</dbReference>
<dbReference type="PANTHER" id="PTHR19370">
    <property type="entry name" value="NADH-CYTOCHROME B5 REDUCTASE"/>
    <property type="match status" value="1"/>
</dbReference>
<dbReference type="PANTHER" id="PTHR19370:SF185">
    <property type="entry name" value="NADH-CYTOCHROME B5 REDUCTASE"/>
    <property type="match status" value="1"/>
</dbReference>
<dbReference type="Pfam" id="PF00173">
    <property type="entry name" value="Cyt-b5"/>
    <property type="match status" value="1"/>
</dbReference>
<dbReference type="Pfam" id="PF00970">
    <property type="entry name" value="FAD_binding_6"/>
    <property type="match status" value="1"/>
</dbReference>
<dbReference type="Pfam" id="PF03404">
    <property type="entry name" value="Mo-co_dimer"/>
    <property type="match status" value="1"/>
</dbReference>
<dbReference type="Pfam" id="PF00175">
    <property type="entry name" value="NAD_binding_1"/>
    <property type="match status" value="1"/>
</dbReference>
<dbReference type="Pfam" id="PF00174">
    <property type="entry name" value="Oxidored_molyb"/>
    <property type="match status" value="1"/>
</dbReference>
<dbReference type="PRINTS" id="PR00406">
    <property type="entry name" value="CYTB5RDTASE"/>
</dbReference>
<dbReference type="PRINTS" id="PR00363">
    <property type="entry name" value="CYTOCHROMEB5"/>
</dbReference>
<dbReference type="PRINTS" id="PR00407">
    <property type="entry name" value="EUMOPTERIN"/>
</dbReference>
<dbReference type="PRINTS" id="PR00371">
    <property type="entry name" value="FPNCR"/>
</dbReference>
<dbReference type="SMART" id="SM01117">
    <property type="entry name" value="Cyt-b5"/>
    <property type="match status" value="1"/>
</dbReference>
<dbReference type="SUPFAM" id="SSF55856">
    <property type="entry name" value="Cytochrome b5-like heme/steroid binding domain"/>
    <property type="match status" value="1"/>
</dbReference>
<dbReference type="SUPFAM" id="SSF81296">
    <property type="entry name" value="E set domains"/>
    <property type="match status" value="1"/>
</dbReference>
<dbReference type="SUPFAM" id="SSF52343">
    <property type="entry name" value="Ferredoxin reductase-like, C-terminal NADP-linked domain"/>
    <property type="match status" value="1"/>
</dbReference>
<dbReference type="SUPFAM" id="SSF56524">
    <property type="entry name" value="Oxidoreductase molybdopterin-binding domain"/>
    <property type="match status" value="1"/>
</dbReference>
<dbReference type="SUPFAM" id="SSF63380">
    <property type="entry name" value="Riboflavin synthase domain-like"/>
    <property type="match status" value="1"/>
</dbReference>
<dbReference type="PROSITE" id="PS00191">
    <property type="entry name" value="CYTOCHROME_B5_1"/>
    <property type="match status" value="1"/>
</dbReference>
<dbReference type="PROSITE" id="PS50255">
    <property type="entry name" value="CYTOCHROME_B5_2"/>
    <property type="match status" value="1"/>
</dbReference>
<dbReference type="PROSITE" id="PS51384">
    <property type="entry name" value="FAD_FR"/>
    <property type="match status" value="1"/>
</dbReference>
<feature type="chain" id="PRO_0000166062" description="Nitrate reductase [NADH] 1">
    <location>
        <begin position="1" status="less than"/>
        <end position="621"/>
    </location>
</feature>
<feature type="domain" description="Cytochrome b5 heme-binding" evidence="3">
    <location>
        <begin position="249"/>
        <end position="324"/>
    </location>
</feature>
<feature type="domain" description="FAD-binding FR-type" evidence="4">
    <location>
        <begin position="361"/>
        <end position="473"/>
    </location>
</feature>
<feature type="binding site" description="axial binding residue" evidence="3">
    <location>
        <position position="284"/>
    </location>
    <ligand>
        <name>heme</name>
        <dbReference type="ChEBI" id="CHEBI:30413"/>
    </ligand>
    <ligandPart>
        <name>Fe</name>
        <dbReference type="ChEBI" id="CHEBI:18248"/>
    </ligandPart>
</feature>
<feature type="binding site" description="axial binding residue" evidence="3">
    <location>
        <position position="307"/>
    </location>
    <ligand>
        <name>heme</name>
        <dbReference type="ChEBI" id="CHEBI:30413"/>
    </ligand>
    <ligandPart>
        <name>Fe</name>
        <dbReference type="ChEBI" id="CHEBI:18248"/>
    </ligandPart>
</feature>
<feature type="binding site" evidence="7 12">
    <location>
        <begin position="413"/>
        <end position="416"/>
    </location>
    <ligand>
        <name>FAD</name>
        <dbReference type="ChEBI" id="CHEBI:57692"/>
    </ligand>
</feature>
<feature type="binding site" evidence="7 12">
    <location>
        <begin position="430"/>
        <end position="432"/>
    </location>
    <ligand>
        <name>FAD</name>
        <dbReference type="ChEBI" id="CHEBI:57692"/>
    </ligand>
</feature>
<feature type="binding site" evidence="7 12">
    <location>
        <position position="435"/>
    </location>
    <ligand>
        <name>FAD</name>
        <dbReference type="ChEBI" id="CHEBI:57692"/>
    </ligand>
</feature>
<feature type="binding site" evidence="7 12">
    <location>
        <begin position="447"/>
        <end position="449"/>
    </location>
    <ligand>
        <name>FAD</name>
        <dbReference type="ChEBI" id="CHEBI:57692"/>
    </ligand>
</feature>
<feature type="binding site" evidence="7 12">
    <location>
        <position position="497"/>
    </location>
    <ligand>
        <name>FAD</name>
        <dbReference type="ChEBI" id="CHEBI:57692"/>
    </ligand>
</feature>
<feature type="binding site" evidence="7 12">
    <location>
        <position position="500"/>
    </location>
    <ligand>
        <name>FAD</name>
        <dbReference type="ChEBI" id="CHEBI:57692"/>
    </ligand>
</feature>
<feature type="site" description="Necessary for efficient electron Transfer" evidence="8">
    <location>
        <position position="593"/>
    </location>
</feature>
<feature type="disulfide bond" description="Interchain" evidence="2">
    <location>
        <position position="138"/>
    </location>
</feature>
<feature type="mutagenesis site" description="Reduction of activity." evidence="6 8">
    <original>C</original>
    <variation>S</variation>
    <location>
        <position position="593"/>
    </location>
</feature>
<feature type="sequence conflict" description="In Ref. 1; AAA03202." evidence="11" ref="1">
    <original>S</original>
    <variation>G</variation>
    <location>
        <position position="459"/>
    </location>
</feature>
<feature type="sequence conflict" description="In Ref. 1; AAA03202." evidence="11" ref="1">
    <original>L</original>
    <variation>V</variation>
    <location>
        <position position="510"/>
    </location>
</feature>
<feature type="sequence conflict" description="In Ref. 1; AAA03202." evidence="11" ref="1">
    <original>D</original>
    <variation>Y</variation>
    <location>
        <position position="547"/>
    </location>
</feature>
<feature type="sequence conflict" description="In Ref. 1; AAA03202." evidence="11" ref="1">
    <location>
        <begin position="560"/>
        <end position="562"/>
    </location>
</feature>
<feature type="non-terminal residue">
    <location>
        <position position="1"/>
    </location>
</feature>
<feature type="strand" evidence="14">
    <location>
        <begin position="364"/>
        <end position="375"/>
    </location>
</feature>
<feature type="strand" evidence="14">
    <location>
        <begin position="378"/>
        <end position="384"/>
    </location>
</feature>
<feature type="strand" evidence="14">
    <location>
        <begin position="399"/>
        <end position="406"/>
    </location>
</feature>
<feature type="strand" evidence="14">
    <location>
        <begin position="409"/>
        <end position="415"/>
    </location>
</feature>
<feature type="strand" evidence="14">
    <location>
        <begin position="425"/>
        <end position="432"/>
    </location>
</feature>
<feature type="strand" evidence="13">
    <location>
        <begin position="436"/>
        <end position="438"/>
    </location>
</feature>
<feature type="helix" evidence="14">
    <location>
        <begin position="447"/>
        <end position="454"/>
    </location>
</feature>
<feature type="strand" evidence="14">
    <location>
        <begin position="460"/>
        <end position="467"/>
    </location>
</feature>
<feature type="strand" evidence="14">
    <location>
        <begin position="469"/>
        <end position="471"/>
    </location>
</feature>
<feature type="strand" evidence="14">
    <location>
        <begin position="474"/>
        <end position="476"/>
    </location>
</feature>
<feature type="strand" evidence="14">
    <location>
        <begin position="478"/>
        <end position="480"/>
    </location>
</feature>
<feature type="strand" evidence="14">
    <location>
        <begin position="483"/>
        <end position="485"/>
    </location>
</feature>
<feature type="strand" evidence="14">
    <location>
        <begin position="488"/>
        <end position="495"/>
    </location>
</feature>
<feature type="helix" evidence="14">
    <location>
        <begin position="496"/>
        <end position="498"/>
    </location>
</feature>
<feature type="helix" evidence="14">
    <location>
        <begin position="499"/>
        <end position="511"/>
    </location>
</feature>
<feature type="turn" evidence="14">
    <location>
        <begin position="512"/>
        <end position="515"/>
    </location>
</feature>
<feature type="strand" evidence="14">
    <location>
        <begin position="519"/>
        <end position="527"/>
    </location>
</feature>
<feature type="helix" evidence="14">
    <location>
        <begin position="529"/>
        <end position="531"/>
    </location>
</feature>
<feature type="helix" evidence="14">
    <location>
        <begin position="535"/>
        <end position="544"/>
    </location>
</feature>
<feature type="turn" evidence="14">
    <location>
        <begin position="546"/>
        <end position="548"/>
    </location>
</feature>
<feature type="strand" evidence="14">
    <location>
        <begin position="549"/>
        <end position="556"/>
    </location>
</feature>
<feature type="helix" evidence="14">
    <location>
        <begin position="561"/>
        <end position="563"/>
    </location>
</feature>
<feature type="strand" evidence="14">
    <location>
        <begin position="567"/>
        <end position="571"/>
    </location>
</feature>
<feature type="helix" evidence="14">
    <location>
        <begin position="574"/>
        <end position="580"/>
    </location>
</feature>
<feature type="strand" evidence="14">
    <location>
        <begin position="585"/>
        <end position="593"/>
    </location>
</feature>
<feature type="helix" evidence="14">
    <location>
        <begin position="596"/>
        <end position="600"/>
    </location>
</feature>
<feature type="turn" evidence="14">
    <location>
        <begin position="601"/>
        <end position="603"/>
    </location>
</feature>
<feature type="helix" evidence="14">
    <location>
        <begin position="604"/>
        <end position="608"/>
    </location>
</feature>
<feature type="turn" evidence="14">
    <location>
        <begin position="609"/>
        <end position="611"/>
    </location>
</feature>
<feature type="helix" evidence="14">
    <location>
        <begin position="614"/>
        <end position="617"/>
    </location>
</feature>
<feature type="strand" evidence="14">
    <location>
        <begin position="618"/>
        <end position="620"/>
    </location>
</feature>
<reference key="1">
    <citation type="journal article" date="1989" name="Plant Physiol.">
        <title>cDNA clones for corn leaf NADH: nitrate reductase and chloroplast NAD(P)(+): glyceraldehyde-3-phosphate dehydrogenase.</title>
        <authorList>
            <person name="Gowri G."/>
            <person name="Campbell W.H."/>
        </authorList>
    </citation>
    <scope>NUCLEOTIDE SEQUENCE [MRNA]</scope>
    <source>
        <strain>cv. W64 X W128E</strain>
        <tissue>Leaf</tissue>
    </source>
</reference>
<reference key="2">
    <citation type="journal article" date="1990" name="Biochem. Biophys. Res. Commun.">
        <title>High-level expression in Escherichia coli of the catalytically active flavin domain of corn leaf NADH:nitrate reductase and its comparison to human NADH:cytochrome B5 reductase.</title>
        <authorList>
            <person name="Hyde G.E."/>
            <person name="Campbell W.H."/>
        </authorList>
    </citation>
    <scope>SEQUENCE REVISION TO 389-390; 405-406 AND 414-417</scope>
    <scope>CHARACTERIZATION</scope>
    <scope>FUNCTION</scope>
    <scope>CATALYTIC ACTIVITY</scope>
    <source>
        <strain>cv. W64 X W128E</strain>
        <tissue>Leaf</tissue>
    </source>
</reference>
<reference key="3">
    <citation type="journal article" date="1991" name="J. Biol. Chem.">
        <title>The sequence of squash NADH:nitrate reductase and its relationship to the sequences of other flavoprotein oxidoreductases. A family of flavoprotein pyridine nucleotide cytochrome reductases.</title>
        <authorList>
            <person name="Hyde G.E."/>
            <person name="Crawford N.M."/>
            <person name="Campbell W.H."/>
        </authorList>
    </citation>
    <scope>SECONDARY STRUCTURE OF FAD DOMAIN</scope>
</reference>
<reference key="4">
    <citation type="journal article" date="1994" name="J. Biol. Chem.">
        <title>Identification of an 'essential' cysteine of nitrate reductase via mutagenesis of its recombinant cytochrome b reductase domain.</title>
        <authorList>
            <person name="Dwivedi U.N."/>
            <person name="Shiraishi N."/>
            <person name="Campbell W.H."/>
        </authorList>
    </citation>
    <scope>CATALYTIC ACTIVITY</scope>
    <scope>MUTAGENESIS OF CYS-593</scope>
</reference>
<reference key="5">
    <citation type="journal article" date="1994" name="Structure">
        <title>Crystal structure of the FAD-containing fragment of corn nitrate reductase at 2.5-A resolution: relationship to other flavoprotein reductases.</title>
        <authorList>
            <person name="Lu G."/>
            <person name="Campbell W.H."/>
            <person name="Schneider G."/>
            <person name="Lindqvist Y."/>
        </authorList>
    </citation>
    <scope>X-RAY CRYSTALLOGRAPHY (2.5 ANGSTROMS) OF 352-621 IN COMPLEX WITH FAD</scope>
    <scope>COFACTOR</scope>
</reference>
<reference key="6">
    <citation type="journal article" date="1995" name="J. Mol. Biol.">
        <title>Structural studies on corn nitrate reductase: refined structure of the cytochrome b reductase fragment at 2.5 A, its ADP complex and an active-site mutant and modeling of the cytochrome b domain.</title>
        <authorList>
            <person name="Lu G."/>
            <person name="Lindqvist Y."/>
            <person name="Schneider G."/>
            <person name="Dwivedi U."/>
            <person name="Campbell W.H."/>
        </authorList>
    </citation>
    <scope>X-RAY CRYSTALLOGRAPHY (2.7 ANGSTROMS) OF 232-501</scope>
    <scope>MUTAGENESIS OF CYS-593</scope>
</reference>
<keyword id="KW-0002">3D-structure</keyword>
<keyword id="KW-1015">Disulfide bond</keyword>
<keyword id="KW-0274">FAD</keyword>
<keyword id="KW-0285">Flavoprotein</keyword>
<keyword id="KW-0349">Heme</keyword>
<keyword id="KW-0408">Iron</keyword>
<keyword id="KW-0479">Metal-binding</keyword>
<keyword id="KW-0500">Molybdenum</keyword>
<keyword id="KW-0520">NAD</keyword>
<keyword id="KW-0534">Nitrate assimilation</keyword>
<keyword id="KW-0560">Oxidoreductase</keyword>
<keyword id="KW-1185">Reference proteome</keyword>